<feature type="chain" id="PRO_0000066742" description="Toxin Boma6d">
    <location>
        <begin position="1"/>
        <end position="70"/>
    </location>
</feature>
<feature type="domain" description="LCN-type CS-alpha/beta" evidence="2">
    <location>
        <begin position="2"/>
        <end position="68"/>
    </location>
</feature>
<feature type="disulfide bond" evidence="2">
    <location>
        <begin position="12"/>
        <end position="67"/>
    </location>
</feature>
<feature type="disulfide bond" evidence="2">
    <location>
        <begin position="16"/>
        <end position="40"/>
    </location>
</feature>
<feature type="disulfide bond" evidence="2">
    <location>
        <begin position="22"/>
        <end position="50"/>
    </location>
</feature>
<feature type="disulfide bond" evidence="2">
    <location>
        <begin position="26"/>
        <end position="52"/>
    </location>
</feature>
<protein>
    <recommendedName>
        <fullName>Toxin Boma6d</fullName>
    </recommendedName>
    <alternativeName>
        <fullName>Alpha-neurotoxin Bom alpha-6d</fullName>
    </alternativeName>
</protein>
<accession>P60258</accession>
<keyword id="KW-1015">Disulfide bond</keyword>
<keyword id="KW-0872">Ion channel impairing toxin</keyword>
<keyword id="KW-0528">Neurotoxin</keyword>
<keyword id="KW-0964">Secreted</keyword>
<keyword id="KW-0800">Toxin</keyword>
<keyword id="KW-0738">Voltage-gated sodium channel impairing toxin</keyword>
<name>SCXD_BUTOM</name>
<evidence type="ECO:0000250" key="1"/>
<evidence type="ECO:0000255" key="2">
    <source>
        <dbReference type="PROSITE-ProRule" id="PRU01210"/>
    </source>
</evidence>
<evidence type="ECO:0000305" key="3"/>
<sequence>VRDAYIAQNYNCVYHCGRDAYCNELCSKNGAKSRTRGGYCHWFGPHGDACWCIDLPNNVPIKVEGKCHRK</sequence>
<proteinExistence type="inferred from homology"/>
<dbReference type="SMR" id="P60258"/>
<dbReference type="GO" id="GO:0005576">
    <property type="term" value="C:extracellular region"/>
    <property type="evidence" value="ECO:0007669"/>
    <property type="project" value="UniProtKB-SubCell"/>
</dbReference>
<dbReference type="GO" id="GO:0019871">
    <property type="term" value="F:sodium channel inhibitor activity"/>
    <property type="evidence" value="ECO:0007669"/>
    <property type="project" value="InterPro"/>
</dbReference>
<dbReference type="GO" id="GO:0090729">
    <property type="term" value="F:toxin activity"/>
    <property type="evidence" value="ECO:0007669"/>
    <property type="project" value="UniProtKB-KW"/>
</dbReference>
<dbReference type="GO" id="GO:0006952">
    <property type="term" value="P:defense response"/>
    <property type="evidence" value="ECO:0007669"/>
    <property type="project" value="InterPro"/>
</dbReference>
<dbReference type="CDD" id="cd23106">
    <property type="entry name" value="neurotoxins_LC_scorpion"/>
    <property type="match status" value="1"/>
</dbReference>
<dbReference type="Gene3D" id="3.30.30.10">
    <property type="entry name" value="Knottin, scorpion toxin-like"/>
    <property type="match status" value="1"/>
</dbReference>
<dbReference type="InterPro" id="IPR044062">
    <property type="entry name" value="LCN-type_CS_alpha_beta_dom"/>
</dbReference>
<dbReference type="InterPro" id="IPR003614">
    <property type="entry name" value="Scorpion_toxin-like"/>
</dbReference>
<dbReference type="InterPro" id="IPR036574">
    <property type="entry name" value="Scorpion_toxin-like_sf"/>
</dbReference>
<dbReference type="InterPro" id="IPR018218">
    <property type="entry name" value="Scorpion_toxinL"/>
</dbReference>
<dbReference type="InterPro" id="IPR002061">
    <property type="entry name" value="Scorpion_toxinL/defensin"/>
</dbReference>
<dbReference type="Pfam" id="PF00537">
    <property type="entry name" value="Toxin_3"/>
    <property type="match status" value="1"/>
</dbReference>
<dbReference type="PRINTS" id="PR00285">
    <property type="entry name" value="SCORPNTOXIN"/>
</dbReference>
<dbReference type="SMART" id="SM00505">
    <property type="entry name" value="Knot1"/>
    <property type="match status" value="1"/>
</dbReference>
<dbReference type="SUPFAM" id="SSF57095">
    <property type="entry name" value="Scorpion toxin-like"/>
    <property type="match status" value="1"/>
</dbReference>
<dbReference type="PROSITE" id="PS51863">
    <property type="entry name" value="LCN_CSAB"/>
    <property type="match status" value="1"/>
</dbReference>
<comment type="function">
    <text evidence="1">Alpha toxins bind voltage-independently at site-3 of sodium channels (Nav) and inhibit the inactivation of the activated channels, thereby blocking neuronal transmission.</text>
</comment>
<comment type="subcellular location">
    <subcellularLocation>
        <location>Secreted</location>
    </subcellularLocation>
</comment>
<comment type="tissue specificity">
    <text>Expressed by the venom gland.</text>
</comment>
<comment type="domain">
    <text evidence="3">Has the structural arrangement of an alpha-helix connected to antiparallel beta-sheets by disulfide bonds (CS-alpha/beta).</text>
</comment>
<comment type="similarity">
    <text evidence="3">Belongs to the long (4 C-C) scorpion toxin superfamily. Sodium channel inhibitor family. Alpha subfamily.</text>
</comment>
<reference key="1">
    <citation type="journal article" date="1999" name="J. Mol. Evol.">
        <title>Dynamic diversification from a putative common ancestor of scorpion toxins affecting sodium, potassium, and chloride channels.</title>
        <authorList>
            <person name="Froy O."/>
            <person name="Sagiv T."/>
            <person name="Poreh M."/>
            <person name="Urbach D."/>
            <person name="Zilberberg N."/>
            <person name="Gurevitz M."/>
        </authorList>
    </citation>
    <scope>NUCLEOTIDE SEQUENCE [GENOMIC DNA]</scope>
    <source>
        <tissue>Single abdominal segment</tissue>
    </source>
</reference>
<organism>
    <name type="scientific">Buthus occitanus mardochei</name>
    <name type="common">Moroccan scorpion</name>
    <name type="synonym">Buthus mardochei</name>
    <dbReference type="NCBI Taxonomy" id="6869"/>
    <lineage>
        <taxon>Eukaryota</taxon>
        <taxon>Metazoa</taxon>
        <taxon>Ecdysozoa</taxon>
        <taxon>Arthropoda</taxon>
        <taxon>Chelicerata</taxon>
        <taxon>Arachnida</taxon>
        <taxon>Scorpiones</taxon>
        <taxon>Buthida</taxon>
        <taxon>Buthoidea</taxon>
        <taxon>Buthidae</taxon>
        <taxon>Buthus</taxon>
    </lineage>
</organism>